<gene>
    <name evidence="1" type="primary">mtlD</name>
    <name type="ordered locus">LCABL_31030</name>
</gene>
<organism>
    <name type="scientific">Lacticaseibacillus casei (strain BL23)</name>
    <name type="common">Lactobacillus casei</name>
    <dbReference type="NCBI Taxonomy" id="543734"/>
    <lineage>
        <taxon>Bacteria</taxon>
        <taxon>Bacillati</taxon>
        <taxon>Bacillota</taxon>
        <taxon>Bacilli</taxon>
        <taxon>Lactobacillales</taxon>
        <taxon>Lactobacillaceae</taxon>
        <taxon>Lacticaseibacillus</taxon>
    </lineage>
</organism>
<sequence>MEAVHFGAGNIGRGFIGETLAANGFKINFVDVNETIINALNQRGEYTITLAAPGEKKIHVDNVDGLNNAKDPEAVVKAIAQADLVTTAIGPKILPIIAPLIAQGLQARDAANNHQALDVIACENMIGGSQSLKKSVYEHLDDAGKTFADTYVGFPNAAVDRIVPQQKHDDPLAVSVEDFKEWVVDESQMKNKDLKLKTVDYVPDLEPYIERKLFSVNTGHATTAYTGKYLGYTTIGDAIKDPKVFNQAKGALAETRSLLLSEFKNFDEKDLENYQNRVLQRFQNPYISDDISRVARTPIRKLGYDERFIRPIRELKERGLNYSVLMDTVGMMFHYVEPNDAEAVKLQAMLKDQPLVDVIKEVTGLKDAGLIDEVEASVKSKDR</sequence>
<proteinExistence type="inferred from homology"/>
<reference key="1">
    <citation type="submission" date="2008-06" db="EMBL/GenBank/DDBJ databases">
        <title>Lactobacillus casei BL23 complete genome sequence.</title>
        <authorList>
            <person name="Maze A."/>
            <person name="Boel G."/>
            <person name="Bourand A."/>
            <person name="Loux V."/>
            <person name="Gibrat J.F."/>
            <person name="Zuniga M."/>
            <person name="Hartke A."/>
            <person name="Deutscher J."/>
        </authorList>
    </citation>
    <scope>NUCLEOTIDE SEQUENCE [LARGE SCALE GENOMIC DNA]</scope>
    <source>
        <strain>BL23</strain>
    </source>
</reference>
<comment type="catalytic activity">
    <reaction evidence="1">
        <text>D-mannitol 1-phosphate + NAD(+) = beta-D-fructose 6-phosphate + NADH + H(+)</text>
        <dbReference type="Rhea" id="RHEA:19661"/>
        <dbReference type="ChEBI" id="CHEBI:15378"/>
        <dbReference type="ChEBI" id="CHEBI:57540"/>
        <dbReference type="ChEBI" id="CHEBI:57634"/>
        <dbReference type="ChEBI" id="CHEBI:57945"/>
        <dbReference type="ChEBI" id="CHEBI:61381"/>
        <dbReference type="EC" id="1.1.1.17"/>
    </reaction>
</comment>
<comment type="similarity">
    <text evidence="1">Belongs to the mannitol dehydrogenase family.</text>
</comment>
<accession>B3WBT3</accession>
<feature type="chain" id="PRO_1000124390" description="Mannitol-1-phosphate 5-dehydrogenase">
    <location>
        <begin position="1"/>
        <end position="383"/>
    </location>
</feature>
<feature type="binding site" evidence="1">
    <location>
        <begin position="3"/>
        <end position="14"/>
    </location>
    <ligand>
        <name>NAD(+)</name>
        <dbReference type="ChEBI" id="CHEBI:57540"/>
    </ligand>
</feature>
<dbReference type="EC" id="1.1.1.17" evidence="1"/>
<dbReference type="EMBL" id="FM177140">
    <property type="protein sequence ID" value="CAQ68152.1"/>
    <property type="molecule type" value="Genomic_DNA"/>
</dbReference>
<dbReference type="SMR" id="B3WBT3"/>
<dbReference type="KEGG" id="lcb:LCABL_31030"/>
<dbReference type="HOGENOM" id="CLU_036089_2_0_9"/>
<dbReference type="GO" id="GO:0005829">
    <property type="term" value="C:cytosol"/>
    <property type="evidence" value="ECO:0007669"/>
    <property type="project" value="TreeGrafter"/>
</dbReference>
<dbReference type="GO" id="GO:0008926">
    <property type="term" value="F:mannitol-1-phosphate 5-dehydrogenase activity"/>
    <property type="evidence" value="ECO:0007669"/>
    <property type="project" value="UniProtKB-UniRule"/>
</dbReference>
<dbReference type="GO" id="GO:0019592">
    <property type="term" value="P:mannitol catabolic process"/>
    <property type="evidence" value="ECO:0007669"/>
    <property type="project" value="TreeGrafter"/>
</dbReference>
<dbReference type="Gene3D" id="1.10.1040.10">
    <property type="entry name" value="N-(1-d-carboxylethyl)-l-norvaline Dehydrogenase, domain 2"/>
    <property type="match status" value="1"/>
</dbReference>
<dbReference type="Gene3D" id="3.40.50.720">
    <property type="entry name" value="NAD(P)-binding Rossmann-like Domain"/>
    <property type="match status" value="1"/>
</dbReference>
<dbReference type="HAMAP" id="MF_00196">
    <property type="entry name" value="Mannitol_dehydrog"/>
    <property type="match status" value="1"/>
</dbReference>
<dbReference type="InterPro" id="IPR008927">
    <property type="entry name" value="6-PGluconate_DH-like_C_sf"/>
</dbReference>
<dbReference type="InterPro" id="IPR013328">
    <property type="entry name" value="6PGD_dom2"/>
</dbReference>
<dbReference type="InterPro" id="IPR023028">
    <property type="entry name" value="Mannitol_1_phos_5_DH"/>
</dbReference>
<dbReference type="InterPro" id="IPR000669">
    <property type="entry name" value="Mannitol_DH"/>
</dbReference>
<dbReference type="InterPro" id="IPR013118">
    <property type="entry name" value="Mannitol_DH_C"/>
</dbReference>
<dbReference type="InterPro" id="IPR023027">
    <property type="entry name" value="Mannitol_DH_CS"/>
</dbReference>
<dbReference type="InterPro" id="IPR013131">
    <property type="entry name" value="Mannitol_DH_N"/>
</dbReference>
<dbReference type="InterPro" id="IPR036291">
    <property type="entry name" value="NAD(P)-bd_dom_sf"/>
</dbReference>
<dbReference type="NCBIfam" id="NF002646">
    <property type="entry name" value="PRK02318.1-2"/>
    <property type="match status" value="1"/>
</dbReference>
<dbReference type="NCBIfam" id="NF002647">
    <property type="entry name" value="PRK02318.1-3"/>
    <property type="match status" value="1"/>
</dbReference>
<dbReference type="NCBIfam" id="NF002652">
    <property type="entry name" value="PRK02318.2-5"/>
    <property type="match status" value="1"/>
</dbReference>
<dbReference type="PANTHER" id="PTHR30524:SF0">
    <property type="entry name" value="ALTRONATE OXIDOREDUCTASE-RELATED"/>
    <property type="match status" value="1"/>
</dbReference>
<dbReference type="PANTHER" id="PTHR30524">
    <property type="entry name" value="MANNITOL-1-PHOSPHATE 5-DEHYDROGENASE"/>
    <property type="match status" value="1"/>
</dbReference>
<dbReference type="Pfam" id="PF01232">
    <property type="entry name" value="Mannitol_dh"/>
    <property type="match status" value="1"/>
</dbReference>
<dbReference type="Pfam" id="PF08125">
    <property type="entry name" value="Mannitol_dh_C"/>
    <property type="match status" value="1"/>
</dbReference>
<dbReference type="PRINTS" id="PR00084">
    <property type="entry name" value="MTLDHDRGNASE"/>
</dbReference>
<dbReference type="SUPFAM" id="SSF48179">
    <property type="entry name" value="6-phosphogluconate dehydrogenase C-terminal domain-like"/>
    <property type="match status" value="1"/>
</dbReference>
<dbReference type="SUPFAM" id="SSF51735">
    <property type="entry name" value="NAD(P)-binding Rossmann-fold domains"/>
    <property type="match status" value="1"/>
</dbReference>
<dbReference type="PROSITE" id="PS00974">
    <property type="entry name" value="MANNITOL_DHGENASE"/>
    <property type="match status" value="1"/>
</dbReference>
<name>MTLD_LACCB</name>
<evidence type="ECO:0000255" key="1">
    <source>
        <dbReference type="HAMAP-Rule" id="MF_00196"/>
    </source>
</evidence>
<keyword id="KW-0520">NAD</keyword>
<keyword id="KW-0560">Oxidoreductase</keyword>
<protein>
    <recommendedName>
        <fullName evidence="1">Mannitol-1-phosphate 5-dehydrogenase</fullName>
        <ecNumber evidence="1">1.1.1.17</ecNumber>
    </recommendedName>
</protein>